<accession>B8GQ83</accession>
<evidence type="ECO:0000255" key="1">
    <source>
        <dbReference type="HAMAP-Rule" id="MF_00692"/>
    </source>
</evidence>
<organism>
    <name type="scientific">Thioalkalivibrio sulfidiphilus (strain HL-EbGR7)</name>
    <dbReference type="NCBI Taxonomy" id="396588"/>
    <lineage>
        <taxon>Bacteria</taxon>
        <taxon>Pseudomonadati</taxon>
        <taxon>Pseudomonadota</taxon>
        <taxon>Gammaproteobacteria</taxon>
        <taxon>Chromatiales</taxon>
        <taxon>Ectothiorhodospiraceae</taxon>
        <taxon>Thioalkalivibrio</taxon>
    </lineage>
</organism>
<dbReference type="EC" id="2.7.7.-" evidence="1"/>
<dbReference type="EC" id="2.7.7.108" evidence="1"/>
<dbReference type="EMBL" id="CP001339">
    <property type="protein sequence ID" value="ACL72278.1"/>
    <property type="molecule type" value="Genomic_DNA"/>
</dbReference>
<dbReference type="RefSeq" id="WP_012637761.1">
    <property type="nucleotide sequence ID" value="NC_011901.1"/>
</dbReference>
<dbReference type="SMR" id="B8GQ83"/>
<dbReference type="STRING" id="396588.Tgr7_1192"/>
<dbReference type="KEGG" id="tgr:Tgr7_1192"/>
<dbReference type="eggNOG" id="COG0397">
    <property type="taxonomic scope" value="Bacteria"/>
</dbReference>
<dbReference type="HOGENOM" id="CLU_010245_4_0_6"/>
<dbReference type="OrthoDB" id="9776281at2"/>
<dbReference type="Proteomes" id="UP000002383">
    <property type="component" value="Chromosome"/>
</dbReference>
<dbReference type="GO" id="GO:0070733">
    <property type="term" value="F:AMPylase activity"/>
    <property type="evidence" value="ECO:0007669"/>
    <property type="project" value="RHEA"/>
</dbReference>
<dbReference type="GO" id="GO:0005524">
    <property type="term" value="F:ATP binding"/>
    <property type="evidence" value="ECO:0007669"/>
    <property type="project" value="UniProtKB-UniRule"/>
</dbReference>
<dbReference type="GO" id="GO:0000287">
    <property type="term" value="F:magnesium ion binding"/>
    <property type="evidence" value="ECO:0007669"/>
    <property type="project" value="UniProtKB-UniRule"/>
</dbReference>
<dbReference type="HAMAP" id="MF_00692">
    <property type="entry name" value="YdiU_SelO"/>
    <property type="match status" value="1"/>
</dbReference>
<dbReference type="InterPro" id="IPR003846">
    <property type="entry name" value="SelO"/>
</dbReference>
<dbReference type="NCBIfam" id="NF000658">
    <property type="entry name" value="PRK00029.1"/>
    <property type="match status" value="1"/>
</dbReference>
<dbReference type="PANTHER" id="PTHR32057">
    <property type="entry name" value="PROTEIN ADENYLYLTRANSFERASE SELO, MITOCHONDRIAL"/>
    <property type="match status" value="1"/>
</dbReference>
<dbReference type="PANTHER" id="PTHR32057:SF14">
    <property type="entry name" value="PROTEIN ADENYLYLTRANSFERASE SELO, MITOCHONDRIAL"/>
    <property type="match status" value="1"/>
</dbReference>
<dbReference type="Pfam" id="PF02696">
    <property type="entry name" value="SelO"/>
    <property type="match status" value="1"/>
</dbReference>
<feature type="chain" id="PRO_1000200067" description="Protein nucleotidyltransferase YdiU">
    <location>
        <begin position="1"/>
        <end position="492"/>
    </location>
</feature>
<feature type="active site" description="Proton acceptor" evidence="1">
    <location>
        <position position="252"/>
    </location>
</feature>
<feature type="binding site" evidence="1">
    <location>
        <position position="90"/>
    </location>
    <ligand>
        <name>ATP</name>
        <dbReference type="ChEBI" id="CHEBI:30616"/>
    </ligand>
</feature>
<feature type="binding site" evidence="1">
    <location>
        <position position="92"/>
    </location>
    <ligand>
        <name>ATP</name>
        <dbReference type="ChEBI" id="CHEBI:30616"/>
    </ligand>
</feature>
<feature type="binding site" evidence="1">
    <location>
        <position position="93"/>
    </location>
    <ligand>
        <name>ATP</name>
        <dbReference type="ChEBI" id="CHEBI:30616"/>
    </ligand>
</feature>
<feature type="binding site" evidence="1">
    <location>
        <position position="113"/>
    </location>
    <ligand>
        <name>ATP</name>
        <dbReference type="ChEBI" id="CHEBI:30616"/>
    </ligand>
</feature>
<feature type="binding site" evidence="1">
    <location>
        <position position="125"/>
    </location>
    <ligand>
        <name>ATP</name>
        <dbReference type="ChEBI" id="CHEBI:30616"/>
    </ligand>
</feature>
<feature type="binding site" evidence="1">
    <location>
        <position position="126"/>
    </location>
    <ligand>
        <name>ATP</name>
        <dbReference type="ChEBI" id="CHEBI:30616"/>
    </ligand>
</feature>
<feature type="binding site" evidence="1">
    <location>
        <position position="176"/>
    </location>
    <ligand>
        <name>ATP</name>
        <dbReference type="ChEBI" id="CHEBI:30616"/>
    </ligand>
</feature>
<feature type="binding site" evidence="1">
    <location>
        <position position="183"/>
    </location>
    <ligand>
        <name>ATP</name>
        <dbReference type="ChEBI" id="CHEBI:30616"/>
    </ligand>
</feature>
<feature type="binding site" evidence="1">
    <location>
        <position position="253"/>
    </location>
    <ligand>
        <name>Mg(2+)</name>
        <dbReference type="ChEBI" id="CHEBI:18420"/>
    </ligand>
</feature>
<feature type="binding site" evidence="1">
    <location>
        <position position="262"/>
    </location>
    <ligand>
        <name>ATP</name>
        <dbReference type="ChEBI" id="CHEBI:30616"/>
    </ligand>
</feature>
<feature type="binding site" evidence="1">
    <location>
        <position position="262"/>
    </location>
    <ligand>
        <name>Mg(2+)</name>
        <dbReference type="ChEBI" id="CHEBI:18420"/>
    </ligand>
</feature>
<reference key="1">
    <citation type="journal article" date="2011" name="Stand. Genomic Sci.">
        <title>Complete genome sequence of 'Thioalkalivibrio sulfidophilus' HL-EbGr7.</title>
        <authorList>
            <person name="Muyzer G."/>
            <person name="Sorokin D.Y."/>
            <person name="Mavromatis K."/>
            <person name="Lapidus A."/>
            <person name="Clum A."/>
            <person name="Ivanova N."/>
            <person name="Pati A."/>
            <person name="d'Haeseleer P."/>
            <person name="Woyke T."/>
            <person name="Kyrpides N.C."/>
        </authorList>
    </citation>
    <scope>NUCLEOTIDE SEQUENCE [LARGE SCALE GENOMIC DNA]</scope>
    <source>
        <strain>HL-EbGR7</strain>
    </source>
</reference>
<proteinExistence type="inferred from homology"/>
<name>SELO_THISH</name>
<keyword id="KW-0067">ATP-binding</keyword>
<keyword id="KW-0460">Magnesium</keyword>
<keyword id="KW-0464">Manganese</keyword>
<keyword id="KW-0479">Metal-binding</keyword>
<keyword id="KW-0547">Nucleotide-binding</keyword>
<keyword id="KW-0548">Nucleotidyltransferase</keyword>
<keyword id="KW-1185">Reference proteome</keyword>
<keyword id="KW-0808">Transferase</keyword>
<protein>
    <recommendedName>
        <fullName evidence="1">Protein nucleotidyltransferase YdiU</fullName>
        <ecNumber evidence="1">2.7.7.-</ecNumber>
    </recommendedName>
    <alternativeName>
        <fullName evidence="1">Protein adenylyltransferase YdiU</fullName>
        <ecNumber evidence="1">2.7.7.108</ecNumber>
    </alternativeName>
    <alternativeName>
        <fullName evidence="1">Protein uridylyltransferase YdiU</fullName>
        <ecNumber evidence="1">2.7.7.-</ecNumber>
    </alternativeName>
</protein>
<comment type="function">
    <text evidence="1">Nucleotidyltransferase involved in the post-translational modification of proteins. It can catalyze the addition of adenosine monophosphate (AMP) or uridine monophosphate (UMP) to a protein, resulting in modifications known as AMPylation and UMPylation.</text>
</comment>
<comment type="catalytic activity">
    <reaction evidence="1">
        <text>L-seryl-[protein] + ATP = 3-O-(5'-adenylyl)-L-seryl-[protein] + diphosphate</text>
        <dbReference type="Rhea" id="RHEA:58120"/>
        <dbReference type="Rhea" id="RHEA-COMP:9863"/>
        <dbReference type="Rhea" id="RHEA-COMP:15073"/>
        <dbReference type="ChEBI" id="CHEBI:29999"/>
        <dbReference type="ChEBI" id="CHEBI:30616"/>
        <dbReference type="ChEBI" id="CHEBI:33019"/>
        <dbReference type="ChEBI" id="CHEBI:142516"/>
        <dbReference type="EC" id="2.7.7.108"/>
    </reaction>
</comment>
<comment type="catalytic activity">
    <reaction evidence="1">
        <text>L-threonyl-[protein] + ATP = 3-O-(5'-adenylyl)-L-threonyl-[protein] + diphosphate</text>
        <dbReference type="Rhea" id="RHEA:54292"/>
        <dbReference type="Rhea" id="RHEA-COMP:11060"/>
        <dbReference type="Rhea" id="RHEA-COMP:13847"/>
        <dbReference type="ChEBI" id="CHEBI:30013"/>
        <dbReference type="ChEBI" id="CHEBI:30616"/>
        <dbReference type="ChEBI" id="CHEBI:33019"/>
        <dbReference type="ChEBI" id="CHEBI:138113"/>
        <dbReference type="EC" id="2.7.7.108"/>
    </reaction>
</comment>
<comment type="catalytic activity">
    <reaction evidence="1">
        <text>L-tyrosyl-[protein] + ATP = O-(5'-adenylyl)-L-tyrosyl-[protein] + diphosphate</text>
        <dbReference type="Rhea" id="RHEA:54288"/>
        <dbReference type="Rhea" id="RHEA-COMP:10136"/>
        <dbReference type="Rhea" id="RHEA-COMP:13846"/>
        <dbReference type="ChEBI" id="CHEBI:30616"/>
        <dbReference type="ChEBI" id="CHEBI:33019"/>
        <dbReference type="ChEBI" id="CHEBI:46858"/>
        <dbReference type="ChEBI" id="CHEBI:83624"/>
        <dbReference type="EC" id="2.7.7.108"/>
    </reaction>
</comment>
<comment type="catalytic activity">
    <reaction evidence="1">
        <text>L-histidyl-[protein] + UTP = N(tele)-(5'-uridylyl)-L-histidyl-[protein] + diphosphate</text>
        <dbReference type="Rhea" id="RHEA:83891"/>
        <dbReference type="Rhea" id="RHEA-COMP:9745"/>
        <dbReference type="Rhea" id="RHEA-COMP:20239"/>
        <dbReference type="ChEBI" id="CHEBI:29979"/>
        <dbReference type="ChEBI" id="CHEBI:33019"/>
        <dbReference type="ChEBI" id="CHEBI:46398"/>
        <dbReference type="ChEBI" id="CHEBI:233474"/>
    </reaction>
</comment>
<comment type="catalytic activity">
    <reaction evidence="1">
        <text>L-seryl-[protein] + UTP = O-(5'-uridylyl)-L-seryl-[protein] + diphosphate</text>
        <dbReference type="Rhea" id="RHEA:64604"/>
        <dbReference type="Rhea" id="RHEA-COMP:9863"/>
        <dbReference type="Rhea" id="RHEA-COMP:16635"/>
        <dbReference type="ChEBI" id="CHEBI:29999"/>
        <dbReference type="ChEBI" id="CHEBI:33019"/>
        <dbReference type="ChEBI" id="CHEBI:46398"/>
        <dbReference type="ChEBI" id="CHEBI:156051"/>
    </reaction>
</comment>
<comment type="catalytic activity">
    <reaction evidence="1">
        <text>L-tyrosyl-[protein] + UTP = O-(5'-uridylyl)-L-tyrosyl-[protein] + diphosphate</text>
        <dbReference type="Rhea" id="RHEA:83887"/>
        <dbReference type="Rhea" id="RHEA-COMP:10136"/>
        <dbReference type="Rhea" id="RHEA-COMP:20238"/>
        <dbReference type="ChEBI" id="CHEBI:33019"/>
        <dbReference type="ChEBI" id="CHEBI:46398"/>
        <dbReference type="ChEBI" id="CHEBI:46858"/>
        <dbReference type="ChEBI" id="CHEBI:90602"/>
    </reaction>
</comment>
<comment type="cofactor">
    <cofactor evidence="1">
        <name>Mg(2+)</name>
        <dbReference type="ChEBI" id="CHEBI:18420"/>
    </cofactor>
    <cofactor evidence="1">
        <name>Mn(2+)</name>
        <dbReference type="ChEBI" id="CHEBI:29035"/>
    </cofactor>
</comment>
<comment type="similarity">
    <text evidence="1">Belongs to the SELO family.</text>
</comment>
<sequence>MHKLEDLKFINSYARLPEAFHDRPMPAPFPQPYRVAFNEKAAALIGLHPEEASRAEFVNAFTGQIPLTGMEPVSMIYAGHQFGVYVPQLGDGRALVLGEVQTPEGARWELQLKGSGPTRFSRGADGRAVLRSTIREYLASEAMHALGVPTTRALTILGSDMPVYRERVETAAILVRMAPSHVRFGSFEYFAHGGYPARLKELADYVIAHHYPELAERYQPYLALLETVIRRTADLIARWQAVGFAHGVMNTDNMSILGLTIDYGPYGFLDAYQPGFICNHSDHRGRYAFDQQPRIAWWNLACLAQALLPLLHEDEAAGVELARAALDRFNGQFASCWTALMGAKLGLLETRREDLDLIERLLGLMAGSAVDYTRFFRALGRFHDPAWLPDLRAAFRDPEAFDAWLADYRARLGHEGREDAARLADMLAVNPKYVLRNYLAQMAIAKAEQKDFSEVERLQRLLERPFDEQPEMEAYAALPPDWAEEIAVSCSS</sequence>
<gene>
    <name evidence="1" type="primary">ydiU</name>
    <name evidence="1" type="synonym">selO</name>
    <name type="ordered locus">Tgr7_1192</name>
</gene>